<name>LEUC_KLEP3</name>
<organism>
    <name type="scientific">Klebsiella pneumoniae (strain 342)</name>
    <dbReference type="NCBI Taxonomy" id="507522"/>
    <lineage>
        <taxon>Bacteria</taxon>
        <taxon>Pseudomonadati</taxon>
        <taxon>Pseudomonadota</taxon>
        <taxon>Gammaproteobacteria</taxon>
        <taxon>Enterobacterales</taxon>
        <taxon>Enterobacteriaceae</taxon>
        <taxon>Klebsiella/Raoultella group</taxon>
        <taxon>Klebsiella</taxon>
        <taxon>Klebsiella pneumoniae complex</taxon>
    </lineage>
</organism>
<proteinExistence type="inferred from homology"/>
<protein>
    <recommendedName>
        <fullName evidence="1">3-isopropylmalate dehydratase large subunit</fullName>
        <ecNumber evidence="1">4.2.1.33</ecNumber>
    </recommendedName>
    <alternativeName>
        <fullName evidence="1">Alpha-IPM isomerase</fullName>
        <shortName evidence="1">IPMI</shortName>
    </alternativeName>
    <alternativeName>
        <fullName evidence="1">Isopropylmalate isomerase</fullName>
    </alternativeName>
</protein>
<gene>
    <name evidence="1" type="primary">leuC</name>
    <name type="ordered locus">KPK_4664</name>
</gene>
<keyword id="KW-0004">4Fe-4S</keyword>
<keyword id="KW-0028">Amino-acid biosynthesis</keyword>
<keyword id="KW-0100">Branched-chain amino acid biosynthesis</keyword>
<keyword id="KW-0408">Iron</keyword>
<keyword id="KW-0411">Iron-sulfur</keyword>
<keyword id="KW-0432">Leucine biosynthesis</keyword>
<keyword id="KW-0456">Lyase</keyword>
<keyword id="KW-0479">Metal-binding</keyword>
<evidence type="ECO:0000255" key="1">
    <source>
        <dbReference type="HAMAP-Rule" id="MF_01026"/>
    </source>
</evidence>
<reference key="1">
    <citation type="journal article" date="2008" name="PLoS Genet.">
        <title>Complete genome sequence of the N2-fixing broad host range endophyte Klebsiella pneumoniae 342 and virulence predictions verified in mice.</title>
        <authorList>
            <person name="Fouts D.E."/>
            <person name="Tyler H.L."/>
            <person name="DeBoy R.T."/>
            <person name="Daugherty S."/>
            <person name="Ren Q."/>
            <person name="Badger J.H."/>
            <person name="Durkin A.S."/>
            <person name="Huot H."/>
            <person name="Shrivastava S."/>
            <person name="Kothari S."/>
            <person name="Dodson R.J."/>
            <person name="Mohamoud Y."/>
            <person name="Khouri H."/>
            <person name="Roesch L.F.W."/>
            <person name="Krogfelt K.A."/>
            <person name="Struve C."/>
            <person name="Triplett E.W."/>
            <person name="Methe B.A."/>
        </authorList>
    </citation>
    <scope>NUCLEOTIDE SEQUENCE [LARGE SCALE GENOMIC DNA]</scope>
    <source>
        <strain>342</strain>
    </source>
</reference>
<comment type="function">
    <text evidence="1">Catalyzes the isomerization between 2-isopropylmalate and 3-isopropylmalate, via the formation of 2-isopropylmaleate.</text>
</comment>
<comment type="catalytic activity">
    <reaction evidence="1">
        <text>(2R,3S)-3-isopropylmalate = (2S)-2-isopropylmalate</text>
        <dbReference type="Rhea" id="RHEA:32287"/>
        <dbReference type="ChEBI" id="CHEBI:1178"/>
        <dbReference type="ChEBI" id="CHEBI:35121"/>
        <dbReference type="EC" id="4.2.1.33"/>
    </reaction>
</comment>
<comment type="cofactor">
    <cofactor evidence="1">
        <name>[4Fe-4S] cluster</name>
        <dbReference type="ChEBI" id="CHEBI:49883"/>
    </cofactor>
    <text evidence="1">Binds 1 [4Fe-4S] cluster per subunit.</text>
</comment>
<comment type="pathway">
    <text evidence="1">Amino-acid biosynthesis; L-leucine biosynthesis; L-leucine from 3-methyl-2-oxobutanoate: step 2/4.</text>
</comment>
<comment type="subunit">
    <text evidence="1">Heterodimer of LeuC and LeuD.</text>
</comment>
<comment type="similarity">
    <text evidence="1">Belongs to the aconitase/IPM isomerase family. LeuC type 1 subfamily.</text>
</comment>
<dbReference type="EC" id="4.2.1.33" evidence="1"/>
<dbReference type="EMBL" id="CP000964">
    <property type="protein sequence ID" value="ACI08673.1"/>
    <property type="molecule type" value="Genomic_DNA"/>
</dbReference>
<dbReference type="SMR" id="B5Y1W4"/>
<dbReference type="KEGG" id="kpe:KPK_4664"/>
<dbReference type="HOGENOM" id="CLU_006714_3_4_6"/>
<dbReference type="UniPathway" id="UPA00048">
    <property type="reaction ID" value="UER00071"/>
</dbReference>
<dbReference type="Proteomes" id="UP000001734">
    <property type="component" value="Chromosome"/>
</dbReference>
<dbReference type="GO" id="GO:0003861">
    <property type="term" value="F:3-isopropylmalate dehydratase activity"/>
    <property type="evidence" value="ECO:0007669"/>
    <property type="project" value="UniProtKB-UniRule"/>
</dbReference>
<dbReference type="GO" id="GO:0051539">
    <property type="term" value="F:4 iron, 4 sulfur cluster binding"/>
    <property type="evidence" value="ECO:0007669"/>
    <property type="project" value="UniProtKB-KW"/>
</dbReference>
<dbReference type="GO" id="GO:0046872">
    <property type="term" value="F:metal ion binding"/>
    <property type="evidence" value="ECO:0007669"/>
    <property type="project" value="UniProtKB-KW"/>
</dbReference>
<dbReference type="GO" id="GO:0009098">
    <property type="term" value="P:L-leucine biosynthetic process"/>
    <property type="evidence" value="ECO:0007669"/>
    <property type="project" value="UniProtKB-UniRule"/>
</dbReference>
<dbReference type="CDD" id="cd01583">
    <property type="entry name" value="IPMI"/>
    <property type="match status" value="1"/>
</dbReference>
<dbReference type="FunFam" id="3.30.499.10:FF:000006">
    <property type="entry name" value="3-isopropylmalate dehydratase large subunit"/>
    <property type="match status" value="1"/>
</dbReference>
<dbReference type="FunFam" id="3.30.499.10:FF:000007">
    <property type="entry name" value="3-isopropylmalate dehydratase large subunit"/>
    <property type="match status" value="1"/>
</dbReference>
<dbReference type="Gene3D" id="3.30.499.10">
    <property type="entry name" value="Aconitase, domain 3"/>
    <property type="match status" value="2"/>
</dbReference>
<dbReference type="HAMAP" id="MF_01026">
    <property type="entry name" value="LeuC_type1"/>
    <property type="match status" value="1"/>
</dbReference>
<dbReference type="InterPro" id="IPR004430">
    <property type="entry name" value="3-IsopropMal_deHydase_lsu"/>
</dbReference>
<dbReference type="InterPro" id="IPR015931">
    <property type="entry name" value="Acnase/IPM_dHydase_lsu_aba_1/3"/>
</dbReference>
<dbReference type="InterPro" id="IPR001030">
    <property type="entry name" value="Acoase/IPM_deHydtase_lsu_aba"/>
</dbReference>
<dbReference type="InterPro" id="IPR018136">
    <property type="entry name" value="Aconitase_4Fe-4S_BS"/>
</dbReference>
<dbReference type="InterPro" id="IPR036008">
    <property type="entry name" value="Aconitase_4Fe-4S_dom"/>
</dbReference>
<dbReference type="InterPro" id="IPR050067">
    <property type="entry name" value="IPM_dehydratase_rel_enz"/>
</dbReference>
<dbReference type="InterPro" id="IPR033941">
    <property type="entry name" value="IPMI_cat"/>
</dbReference>
<dbReference type="NCBIfam" id="TIGR00170">
    <property type="entry name" value="leuC"/>
    <property type="match status" value="1"/>
</dbReference>
<dbReference type="NCBIfam" id="NF004016">
    <property type="entry name" value="PRK05478.1"/>
    <property type="match status" value="1"/>
</dbReference>
<dbReference type="NCBIfam" id="NF009116">
    <property type="entry name" value="PRK12466.1"/>
    <property type="match status" value="1"/>
</dbReference>
<dbReference type="PANTHER" id="PTHR43822:SF9">
    <property type="entry name" value="3-ISOPROPYLMALATE DEHYDRATASE"/>
    <property type="match status" value="1"/>
</dbReference>
<dbReference type="PANTHER" id="PTHR43822">
    <property type="entry name" value="HOMOACONITASE, MITOCHONDRIAL-RELATED"/>
    <property type="match status" value="1"/>
</dbReference>
<dbReference type="Pfam" id="PF00330">
    <property type="entry name" value="Aconitase"/>
    <property type="match status" value="1"/>
</dbReference>
<dbReference type="PRINTS" id="PR00415">
    <property type="entry name" value="ACONITASE"/>
</dbReference>
<dbReference type="SUPFAM" id="SSF53732">
    <property type="entry name" value="Aconitase iron-sulfur domain"/>
    <property type="match status" value="1"/>
</dbReference>
<dbReference type="PROSITE" id="PS00450">
    <property type="entry name" value="ACONITASE_1"/>
    <property type="match status" value="1"/>
</dbReference>
<dbReference type="PROSITE" id="PS01244">
    <property type="entry name" value="ACONITASE_2"/>
    <property type="match status" value="1"/>
</dbReference>
<accession>B5Y1W4</accession>
<feature type="chain" id="PRO_1000135689" description="3-isopropylmalate dehydratase large subunit">
    <location>
        <begin position="1"/>
        <end position="466"/>
    </location>
</feature>
<feature type="binding site" evidence="1">
    <location>
        <position position="347"/>
    </location>
    <ligand>
        <name>[4Fe-4S] cluster</name>
        <dbReference type="ChEBI" id="CHEBI:49883"/>
    </ligand>
</feature>
<feature type="binding site" evidence="1">
    <location>
        <position position="407"/>
    </location>
    <ligand>
        <name>[4Fe-4S] cluster</name>
        <dbReference type="ChEBI" id="CHEBI:49883"/>
    </ligand>
</feature>
<feature type="binding site" evidence="1">
    <location>
        <position position="410"/>
    </location>
    <ligand>
        <name>[4Fe-4S] cluster</name>
        <dbReference type="ChEBI" id="CHEBI:49883"/>
    </ligand>
</feature>
<sequence length="466" mass="49801">MAKTLYEKLFDAHVVYEAQNETPLLYIDRHLVHEVTSPQAFDGLRAHGRQVRQPGKTFATMDHNVSTQTKDINASGEMARIQMQELIKNCKEFGVELYDLNHPYQGIVHVMGPEQGVTLPGMTIVCGDSHTATHGAFGALAFGIGTSEVEHVLATQTLKQGRAKTMKIDVQGKAAPGITAKDIVLAIIGKTGSAGGTGHVVEFCGEAIRDLSMEGRMTLCNMAIEMGAKAGLVAPDETTFNYVRGRLHAPKGKDFDDAVAYWKTLKTDDGATFDTVVTLQAAEIAPQVTWGTNPGQVISVTDNIPDPASFSDPVERASAEKALAYMGLKSGIPLTDVAIDKVFIGSCTNSRIEDLRAAAEIAKGRKVAPGVQALVVPGSGPVKAQAEAEGLDKIFIEAGFEWRLPGCSMCLAMNNDRLNPGERCASTSNRNFEGRQGRGGRTHLVSPAMAAAAAVTGHFADIRNLK</sequence>